<proteinExistence type="inferred from homology"/>
<keyword id="KW-0963">Cytoplasm</keyword>
<keyword id="KW-0210">Decarboxylase</keyword>
<keyword id="KW-0456">Lyase</keyword>
<keyword id="KW-0627">Porphyrin biosynthesis</keyword>
<reference key="1">
    <citation type="journal article" date="2004" name="Proc. Natl. Acad. Sci. U.S.A.">
        <title>Genome sequence of Picrophilus torridus and its implications for life around pH 0.</title>
        <authorList>
            <person name="Fuetterer O."/>
            <person name="Angelov A."/>
            <person name="Liesegang H."/>
            <person name="Gottschalk G."/>
            <person name="Schleper C."/>
            <person name="Schepers B."/>
            <person name="Dock C."/>
            <person name="Antranikian G."/>
            <person name="Liebl W."/>
        </authorList>
    </citation>
    <scope>NUCLEOTIDE SEQUENCE [LARGE SCALE GENOMIC DNA]</scope>
    <source>
        <strain>ATCC 700027 / DSM 9790 / JCM 10055 / NBRC 100828 / KAW 2/3</strain>
    </source>
</reference>
<sequence length="331" mass="37932">MNSFISMIRNGYSDTIPVWFMRQAGRYLKEYNEKKGRMTIKEICMDPELIAGISYDPVRILNVDAAIIFSDITIPLEALGYKIEFLPGGPRIINGYIKNHDMKDIIYFEESNFKYKIYDAIKIFKEKYHFPLIGFSGGLITVLSYIIAGGPDSNLNLTKRSMLSDDKFNDYINIIKDMIIKYIRLQVRAGVDAIQIFDSWLGYLSPQTYENYIKGHIEEILSEINVPVIYFSTGTSSIIEKLSRLNVDYISVDWRLDMKLARSMVNKKGLQGNLDPLIAAYNLRYALKETSDIINAAGRSSYIFNLGHGVIPETPVENLKHIVNFVHNFNQ</sequence>
<evidence type="ECO:0000255" key="1">
    <source>
        <dbReference type="HAMAP-Rule" id="MF_00218"/>
    </source>
</evidence>
<accession>Q6KZ54</accession>
<protein>
    <recommendedName>
        <fullName evidence="1">Uroporphyrinogen decarboxylase</fullName>
        <shortName evidence="1">UPD</shortName>
        <shortName evidence="1">URO-D</shortName>
        <ecNumber evidence="1">4.1.1.37</ecNumber>
    </recommendedName>
</protein>
<dbReference type="EC" id="4.1.1.37" evidence="1"/>
<dbReference type="EMBL" id="AE017261">
    <property type="protein sequence ID" value="AAT43998.1"/>
    <property type="molecule type" value="Genomic_DNA"/>
</dbReference>
<dbReference type="RefSeq" id="WP_011178214.1">
    <property type="nucleotide sequence ID" value="NC_005877.1"/>
</dbReference>
<dbReference type="SMR" id="Q6KZ54"/>
<dbReference type="STRING" id="263820.PTO1413"/>
<dbReference type="PaxDb" id="263820-PTO1413"/>
<dbReference type="GeneID" id="2844178"/>
<dbReference type="KEGG" id="pto:PTO1413"/>
<dbReference type="PATRIC" id="fig|263820.9.peg.1467"/>
<dbReference type="eggNOG" id="arCOG03323">
    <property type="taxonomic scope" value="Archaea"/>
</dbReference>
<dbReference type="HOGENOM" id="CLU_040933_0_1_2"/>
<dbReference type="InParanoid" id="Q6KZ54"/>
<dbReference type="OrthoDB" id="124836at2157"/>
<dbReference type="UniPathway" id="UPA00251">
    <property type="reaction ID" value="UER00321"/>
</dbReference>
<dbReference type="Proteomes" id="UP000000438">
    <property type="component" value="Chromosome"/>
</dbReference>
<dbReference type="GO" id="GO:0005829">
    <property type="term" value="C:cytosol"/>
    <property type="evidence" value="ECO:0007669"/>
    <property type="project" value="TreeGrafter"/>
</dbReference>
<dbReference type="GO" id="GO:0004853">
    <property type="term" value="F:uroporphyrinogen decarboxylase activity"/>
    <property type="evidence" value="ECO:0007669"/>
    <property type="project" value="UniProtKB-UniRule"/>
</dbReference>
<dbReference type="GO" id="GO:0006782">
    <property type="term" value="P:protoporphyrinogen IX biosynthetic process"/>
    <property type="evidence" value="ECO:0007669"/>
    <property type="project" value="UniProtKB-UniRule"/>
</dbReference>
<dbReference type="CDD" id="cd00717">
    <property type="entry name" value="URO-D"/>
    <property type="match status" value="1"/>
</dbReference>
<dbReference type="Gene3D" id="3.20.20.210">
    <property type="match status" value="1"/>
</dbReference>
<dbReference type="HAMAP" id="MF_00218">
    <property type="entry name" value="URO_D"/>
    <property type="match status" value="1"/>
</dbReference>
<dbReference type="InterPro" id="IPR038071">
    <property type="entry name" value="UROD/MetE-like_sf"/>
</dbReference>
<dbReference type="InterPro" id="IPR006361">
    <property type="entry name" value="Uroporphyrinogen_deCO2ase_HemE"/>
</dbReference>
<dbReference type="InterPro" id="IPR000257">
    <property type="entry name" value="Uroporphyrinogen_deCOase"/>
</dbReference>
<dbReference type="NCBIfam" id="TIGR01464">
    <property type="entry name" value="hemE"/>
    <property type="match status" value="1"/>
</dbReference>
<dbReference type="PANTHER" id="PTHR21091">
    <property type="entry name" value="METHYLTETRAHYDROFOLATE:HOMOCYSTEINE METHYLTRANSFERASE RELATED"/>
    <property type="match status" value="1"/>
</dbReference>
<dbReference type="PANTHER" id="PTHR21091:SF169">
    <property type="entry name" value="UROPORPHYRINOGEN DECARBOXYLASE"/>
    <property type="match status" value="1"/>
</dbReference>
<dbReference type="Pfam" id="PF01208">
    <property type="entry name" value="URO-D"/>
    <property type="match status" value="1"/>
</dbReference>
<dbReference type="SUPFAM" id="SSF51726">
    <property type="entry name" value="UROD/MetE-like"/>
    <property type="match status" value="1"/>
</dbReference>
<dbReference type="PROSITE" id="PS00906">
    <property type="entry name" value="UROD_1"/>
    <property type="match status" value="1"/>
</dbReference>
<organism>
    <name type="scientific">Picrophilus torridus (strain ATCC 700027 / DSM 9790 / JCM 10055 / NBRC 100828 / KAW 2/3)</name>
    <dbReference type="NCBI Taxonomy" id="1122961"/>
    <lineage>
        <taxon>Archaea</taxon>
        <taxon>Methanobacteriati</taxon>
        <taxon>Thermoplasmatota</taxon>
        <taxon>Thermoplasmata</taxon>
        <taxon>Thermoplasmatales</taxon>
        <taxon>Picrophilaceae</taxon>
        <taxon>Picrophilus</taxon>
    </lineage>
</organism>
<feature type="chain" id="PRO_0000313685" description="Uroporphyrinogen decarboxylase">
    <location>
        <begin position="1"/>
        <end position="331"/>
    </location>
</feature>
<feature type="binding site" evidence="1">
    <location>
        <begin position="22"/>
        <end position="26"/>
    </location>
    <ligand>
        <name>substrate</name>
    </ligand>
</feature>
<feature type="binding site" evidence="1">
    <location>
        <position position="71"/>
    </location>
    <ligand>
        <name>substrate</name>
    </ligand>
</feature>
<feature type="binding site" evidence="1">
    <location>
        <position position="145"/>
    </location>
    <ligand>
        <name>substrate</name>
    </ligand>
</feature>
<feature type="binding site" evidence="1">
    <location>
        <position position="199"/>
    </location>
    <ligand>
        <name>substrate</name>
    </ligand>
</feature>
<feature type="binding site" evidence="1">
    <location>
        <position position="308"/>
    </location>
    <ligand>
        <name>substrate</name>
    </ligand>
</feature>
<feature type="site" description="Transition state stabilizer" evidence="1">
    <location>
        <position position="71"/>
    </location>
</feature>
<comment type="function">
    <text evidence="1">Catalyzes the decarboxylation of four acetate groups of uroporphyrinogen-III to yield coproporphyrinogen-III.</text>
</comment>
<comment type="catalytic activity">
    <reaction evidence="1">
        <text>uroporphyrinogen III + 4 H(+) = coproporphyrinogen III + 4 CO2</text>
        <dbReference type="Rhea" id="RHEA:19865"/>
        <dbReference type="ChEBI" id="CHEBI:15378"/>
        <dbReference type="ChEBI" id="CHEBI:16526"/>
        <dbReference type="ChEBI" id="CHEBI:57308"/>
        <dbReference type="ChEBI" id="CHEBI:57309"/>
        <dbReference type="EC" id="4.1.1.37"/>
    </reaction>
</comment>
<comment type="pathway">
    <text evidence="1">Porphyrin-containing compound metabolism; protoporphyrin-IX biosynthesis; coproporphyrinogen-III from 5-aminolevulinate: step 4/4.</text>
</comment>
<comment type="subunit">
    <text evidence="1">Homodimer.</text>
</comment>
<comment type="subcellular location">
    <subcellularLocation>
        <location evidence="1">Cytoplasm</location>
    </subcellularLocation>
</comment>
<comment type="similarity">
    <text evidence="1">Belongs to the uroporphyrinogen decarboxylase family.</text>
</comment>
<gene>
    <name evidence="1" type="primary">hemE</name>
    <name type="ordered locus">PTO1413</name>
</gene>
<name>DCUP_PICTO</name>